<comment type="function">
    <text evidence="2">Involved in the uptake of osmoprotectants. Can transport glycine betaine, proline and choline.</text>
</comment>
<comment type="subcellular location">
    <subcellularLocation>
        <location evidence="3">Cell inner membrane</location>
        <topology evidence="1">Multi-pass membrane protein</topology>
    </subcellularLocation>
</comment>
<comment type="similarity">
    <text evidence="3">Belongs to the BCCT transporter (TC 2.A.15) family.</text>
</comment>
<protein>
    <recommendedName>
        <fullName evidence="3">Glycine betaine/proline/choline transporter VP1723</fullName>
    </recommendedName>
</protein>
<dbReference type="EMBL" id="BA000031">
    <property type="protein sequence ID" value="BAC59986.1"/>
    <property type="molecule type" value="Genomic_DNA"/>
</dbReference>
<dbReference type="RefSeq" id="NP_798102.1">
    <property type="nucleotide sequence ID" value="NC_004603.1"/>
</dbReference>
<dbReference type="RefSeq" id="WP_005477808.1">
    <property type="nucleotide sequence ID" value="NC_004603.1"/>
</dbReference>
<dbReference type="SMR" id="Q87NZ5"/>
<dbReference type="GeneID" id="1189230"/>
<dbReference type="KEGG" id="vpa:VP1723"/>
<dbReference type="PATRIC" id="fig|223926.6.peg.1643"/>
<dbReference type="eggNOG" id="COG1292">
    <property type="taxonomic scope" value="Bacteria"/>
</dbReference>
<dbReference type="HOGENOM" id="CLU_010118_5_0_6"/>
<dbReference type="Proteomes" id="UP000002493">
    <property type="component" value="Chromosome 1"/>
</dbReference>
<dbReference type="GO" id="GO:0005886">
    <property type="term" value="C:plasma membrane"/>
    <property type="evidence" value="ECO:0007669"/>
    <property type="project" value="UniProtKB-SubCell"/>
</dbReference>
<dbReference type="GO" id="GO:0022857">
    <property type="term" value="F:transmembrane transporter activity"/>
    <property type="evidence" value="ECO:0007669"/>
    <property type="project" value="InterPro"/>
</dbReference>
<dbReference type="GO" id="GO:0006865">
    <property type="term" value="P:amino acid transport"/>
    <property type="evidence" value="ECO:0007669"/>
    <property type="project" value="UniProtKB-KW"/>
</dbReference>
<dbReference type="InterPro" id="IPR000060">
    <property type="entry name" value="BCCT_transptr"/>
</dbReference>
<dbReference type="NCBIfam" id="TIGR00842">
    <property type="entry name" value="bcct"/>
    <property type="match status" value="1"/>
</dbReference>
<dbReference type="PANTHER" id="PTHR30047:SF7">
    <property type="entry name" value="HIGH-AFFINITY CHOLINE TRANSPORT PROTEIN"/>
    <property type="match status" value="1"/>
</dbReference>
<dbReference type="PANTHER" id="PTHR30047">
    <property type="entry name" value="HIGH-AFFINITY CHOLINE TRANSPORT PROTEIN-RELATED"/>
    <property type="match status" value="1"/>
</dbReference>
<dbReference type="Pfam" id="PF02028">
    <property type="entry name" value="BCCT"/>
    <property type="match status" value="1"/>
</dbReference>
<sequence>MSTDNNGGIKRPDGKVNAIDTDYQIGQDNVALKVGPFGLDIHNRVFAISGMAIVLFVVATLTFRQQVEPFFAGLRAWLVSNLDWFFLASGNVFVIVCLVLIVTPLGRVRIGGTEATPDYSYAGWLAMLFAAGMGIGLVFFGVSEPMSHFSSALGGVNIENGVRTDWAPLGGAVGDTDAASALGMAATIYHWALHPWSIYALLALGLAIFSFNKGLPLTMRSIFYPLFGERVWGWVGHIIDILAVVATVFGLATSLGYGASQAATGLNFLFGVPMTDTTQVVLIVVITALALISVVAGLDSGVKRLSEINMILAAMLLFFVIIVGPTMAILTGFFDNIASYITNIPALSMPFEREDVNYSQGWTAFYWAWWISWSPFVGMFIARVSRGRSVREFIICVILIPSTVCVLWMTAFGGTAISQYVNDGYEAVFNAELPLKLFAMLDVMPFAEITSVVGIILVVVFFITSSDSGSLVIDTIAAGGKVDAPTPQRVFWCTFEGLVAIALMLGGGLAAAQAMAVTTGLPFTIVLLVATVSLIKGLMDEPRLSTKAVKKDK</sequence>
<reference key="1">
    <citation type="journal article" date="2003" name="Lancet">
        <title>Genome sequence of Vibrio parahaemolyticus: a pathogenic mechanism distinct from that of V. cholerae.</title>
        <authorList>
            <person name="Makino K."/>
            <person name="Oshima K."/>
            <person name="Kurokawa K."/>
            <person name="Yokoyama K."/>
            <person name="Uda T."/>
            <person name="Tagomori K."/>
            <person name="Iijima Y."/>
            <person name="Najima M."/>
            <person name="Nakano M."/>
            <person name="Yamashita A."/>
            <person name="Kubota Y."/>
            <person name="Kimura S."/>
            <person name="Yasunaga T."/>
            <person name="Honda T."/>
            <person name="Shinagawa H."/>
            <person name="Hattori M."/>
            <person name="Iida T."/>
        </authorList>
    </citation>
    <scope>NUCLEOTIDE SEQUENCE [LARGE SCALE GENOMIC DNA]</scope>
    <source>
        <strain>RIMD 2210633</strain>
    </source>
</reference>
<reference key="2">
    <citation type="journal article" date="2015" name="Appl. Environ. Microbiol.">
        <title>Deciphering the role of multiple betaine-carnitine-choline transporters in the halophile Vibrio parahaemolyticus.</title>
        <authorList>
            <person name="Ongagna-Yhombi S.Y."/>
            <person name="McDonald N.D."/>
            <person name="Boyd E.F."/>
        </authorList>
    </citation>
    <scope>FUNCTION AS A TRANSPORTER</scope>
    <source>
        <strain>RIMD 2210633</strain>
    </source>
</reference>
<organism>
    <name type="scientific">Vibrio parahaemolyticus serotype O3:K6 (strain RIMD 2210633)</name>
    <dbReference type="NCBI Taxonomy" id="223926"/>
    <lineage>
        <taxon>Bacteria</taxon>
        <taxon>Pseudomonadati</taxon>
        <taxon>Pseudomonadota</taxon>
        <taxon>Gammaproteobacteria</taxon>
        <taxon>Vibrionales</taxon>
        <taxon>Vibrionaceae</taxon>
        <taxon>Vibrio</taxon>
    </lineage>
</organism>
<accession>Q87NZ5</accession>
<keyword id="KW-0029">Amino-acid transport</keyword>
<keyword id="KW-0997">Cell inner membrane</keyword>
<keyword id="KW-1003">Cell membrane</keyword>
<keyword id="KW-0472">Membrane</keyword>
<keyword id="KW-0812">Transmembrane</keyword>
<keyword id="KW-1133">Transmembrane helix</keyword>
<keyword id="KW-0813">Transport</keyword>
<name>BCCT2_VIBPA</name>
<feature type="chain" id="PRO_0000441716" description="Glycine betaine/proline/choline transporter VP1723">
    <location>
        <begin position="1"/>
        <end position="553"/>
    </location>
</feature>
<feature type="transmembrane region" description="Helical" evidence="1">
    <location>
        <begin position="43"/>
        <end position="63"/>
    </location>
</feature>
<feature type="transmembrane region" description="Helical" evidence="1">
    <location>
        <begin position="85"/>
        <end position="105"/>
    </location>
</feature>
<feature type="transmembrane region" description="Helical" evidence="1">
    <location>
        <begin position="122"/>
        <end position="142"/>
    </location>
</feature>
<feature type="transmembrane region" description="Helical" evidence="1">
    <location>
        <begin position="191"/>
        <end position="211"/>
    </location>
</feature>
<feature type="transmembrane region" description="Helical" evidence="1">
    <location>
        <begin position="231"/>
        <end position="251"/>
    </location>
</feature>
<feature type="transmembrane region" description="Helical" evidence="1">
    <location>
        <begin position="278"/>
        <end position="298"/>
    </location>
</feature>
<feature type="transmembrane region" description="Helical" evidence="1">
    <location>
        <begin position="310"/>
        <end position="330"/>
    </location>
</feature>
<feature type="transmembrane region" description="Helical" evidence="1">
    <location>
        <begin position="362"/>
        <end position="382"/>
    </location>
</feature>
<feature type="transmembrane region" description="Helical" evidence="1">
    <location>
        <begin position="393"/>
        <end position="413"/>
    </location>
</feature>
<feature type="transmembrane region" description="Helical" evidence="1">
    <location>
        <begin position="443"/>
        <end position="463"/>
    </location>
</feature>
<feature type="transmembrane region" description="Helical" evidence="1">
    <location>
        <begin position="490"/>
        <end position="510"/>
    </location>
</feature>
<feature type="transmembrane region" description="Helical" evidence="1">
    <location>
        <begin position="515"/>
        <end position="535"/>
    </location>
</feature>
<proteinExistence type="evidence at protein level"/>
<evidence type="ECO:0000255" key="1"/>
<evidence type="ECO:0000269" key="2">
    <source>
    </source>
</evidence>
<evidence type="ECO:0000305" key="3"/>
<evidence type="ECO:0000312" key="4">
    <source>
        <dbReference type="EMBL" id="BAC59986.1"/>
    </source>
</evidence>
<gene>
    <name evidence="4" type="ordered locus">VP1723</name>
</gene>